<protein>
    <recommendedName>
        <fullName>C-X-C chemokine receptor type 4</fullName>
        <shortName>CXC-R4</shortName>
        <shortName>CXCR-4</shortName>
    </recommendedName>
    <alternativeName>
        <fullName>Fusin</fullName>
    </alternativeName>
    <alternativeName>
        <fullName>Leukocyte-derived seven transmembrane domain receptor</fullName>
        <shortName>LESTR</shortName>
    </alternativeName>
    <alternativeName>
        <fullName>Stromal cell-derived factor 1 receptor</fullName>
        <shortName>SDF-1 receptor</shortName>
    </alternativeName>
    <cdAntigenName>CD184</cdAntigenName>
</protein>
<gene>
    <name type="primary">CXCR4</name>
</gene>
<comment type="function">
    <text evidence="2 3">Receptor for the C-X-C chemokine CXCL12/SDF-1 that transduces a signal by increasing intracellular calcium ion levels and enhancing MAPK1/MAPK3 activation. Involved in the AKT signaling cascade (By similarity). Plays a role in regulation of cell migration, e.g. during wound healing. Acts as a receptor for extracellular ubiquitin; leading to enhanced intracellular calcium ions and reduced cellular cAMP levels. Binds bacterial lipopolysaccharide (LPS) et mediates LPS-induced inflammatory response, including TNF secretion by monocytes (By similarity). Involved in hematopoiesis and in cardiac ventricular septum formation. Also plays an essential role in vascularization of the gastrointestinal tract, probably by regulating vascular branching and/or remodeling processes in endothelial cells. Involved in cerebellar development. In the CNS, could mediate hippocampal-neuron survival (By similarity).</text>
</comment>
<comment type="subunit">
    <text evidence="2">Monomer. Can form homodimers. Interacts with CD164. Interacts with ARRB2; the interaction is dependent on the C-terminal phosphorylation of CXCR4 and allows activation of MAPK1 and MAPK3. Interacts with ARR3; the interaction is dependent on the C-terminal phosphorylation of CXCR4 and modulates calcium mobilization. Interacts with RNF113A; the interaction, enhanced by CXCL12, promotes CXCR4 ubiquitination and subsequent degradation. Interacts (via the cytoplasmic C-terminal) with ITCH (via the WW domains I and II); the interaction, enhanced by CXCL12, promotes CXCR4 ubiquitination and leads to its degradation. Interacts with extracellular ubiquitin. Interacts with DBN1; this interaction is enhanced by antigenic stimulation. Following LPS binding, may form a complex with GDF5, HSP90AA1 and HSPA8.</text>
</comment>
<comment type="subcellular location">
    <subcellularLocation>
        <location evidence="2">Cell membrane</location>
        <topology evidence="2">Multi-pass membrane protein</topology>
    </subcellularLocation>
    <subcellularLocation>
        <location evidence="1">Cell junction</location>
    </subcellularLocation>
    <subcellularLocation>
        <location evidence="1">Early endosome</location>
    </subcellularLocation>
    <subcellularLocation>
        <location evidence="1">Late endosome</location>
    </subcellularLocation>
    <subcellularLocation>
        <location evidence="1">Lysosome</location>
    </subcellularLocation>
    <text evidence="1">In unstimulated cells, diffuse pattern on plasma membrane. On agonist stimulation, colocalizes with ITCH at the plasma membrane where it becomes ubiquitinated (By similarity). In the presence of antigen, distributes to the immunological synapse forming at the T-cell-APC contact area, where it localizes at the peripheral and distal supramolecular activation cluster (SMAC) (By similarity).</text>
</comment>
<comment type="PTM">
    <text evidence="2">Phosphorylated on agonist stimulation. Rapidly phosphorylated on serine and threonine residues in the C-terminal. Phosphorylation at Ser-324 and Ser-325 leads to recruitment of ITCH, ubiquitination and protein degradation.</text>
</comment>
<comment type="PTM">
    <text evidence="2">Ubiquitinated after ligand binding, leading to its degradation. Ubiquitinated by ITCH at the cell membrane on agonist stimulation. The ubiquitin-dependent mechanism, endosomal sorting complex required for transport (ESCRT), then targets CXCR4 for lysosomal degradation. This process is dependent also on prior Ser-/Thr-phosphorylation in the C-terminal of CXCR4. Also binding of ARRB1 to STAM negatively regulates CXCR4 sorting to lysosomes though modulating ubiquitination of SFR5S.</text>
</comment>
<comment type="PTM">
    <text evidence="2">Sulfation is required for efficient binding of CXCL12/SDF-1alpha and promotes its dimerization.</text>
</comment>
<comment type="PTM">
    <text evidence="2">O- and N-glycosylated. N-glycosylation can mask coreceptor function. The O-glycosylation chondroitin sulfate attachment does not affect interaction with CXCL12/SDF-1alpha nor its coreceptor activity.</text>
</comment>
<comment type="similarity">
    <text evidence="4">Belongs to the G-protein coupled receptor 1 family.</text>
</comment>
<evidence type="ECO:0000250" key="1"/>
<evidence type="ECO:0000250" key="2">
    <source>
        <dbReference type="UniProtKB" id="P61073"/>
    </source>
</evidence>
<evidence type="ECO:0000250" key="3">
    <source>
        <dbReference type="UniProtKB" id="P70658"/>
    </source>
</evidence>
<evidence type="ECO:0000255" key="4">
    <source>
        <dbReference type="PROSITE-ProRule" id="PRU00521"/>
    </source>
</evidence>
<evidence type="ECO:0000256" key="5">
    <source>
        <dbReference type="SAM" id="MobiDB-lite"/>
    </source>
</evidence>
<evidence type="ECO:0000305" key="6"/>
<name>CXCR4_CERAT</name>
<accession>O62747</accession>
<organism>
    <name type="scientific">Cercocebus atys</name>
    <name type="common">Sooty mangabey</name>
    <name type="synonym">Cercocebus torquatus atys</name>
    <dbReference type="NCBI Taxonomy" id="9531"/>
    <lineage>
        <taxon>Eukaryota</taxon>
        <taxon>Metazoa</taxon>
        <taxon>Chordata</taxon>
        <taxon>Craniata</taxon>
        <taxon>Vertebrata</taxon>
        <taxon>Euteleostomi</taxon>
        <taxon>Mammalia</taxon>
        <taxon>Eutheria</taxon>
        <taxon>Euarchontoglires</taxon>
        <taxon>Primates</taxon>
        <taxon>Haplorrhini</taxon>
        <taxon>Catarrhini</taxon>
        <taxon>Cercopithecidae</taxon>
        <taxon>Cercopithecinae</taxon>
        <taxon>Cercocebus</taxon>
    </lineage>
</organism>
<proteinExistence type="evidence at transcript level"/>
<sequence length="352" mass="39649">MEGISIYTSDNYTEEMGSGDYDSIKEPCFREKNAHFNRIFLPTIYSIIFLTGIVGNGLVILVMGYQKKLRSMTDKYRLHLSVADLLFVITLPFWAVDAVANWYFGNFLCKAVHVIYTVNLYSSVLILAFISLDRYLAIVHATNSQKPRKLLAEKVVYVGVWIPALLLTIPGFIFASVSEADDRFICDRFYPNDLWVVVFQFQHIMVGLILPGIVILSCYCIIISKLSHSKGHQKRKALKTTVILILAFFACWLPYYIGISIDSFILLEIIKQGCEFENTVHKWISITEALAFFHCCLNPILYAFLGAKFKTSAQHALTSVSRGSSLKILSKGKRGGHSSVSTESESSSFHSS</sequence>
<keyword id="KW-0965">Cell junction</keyword>
<keyword id="KW-1003">Cell membrane</keyword>
<keyword id="KW-1015">Disulfide bond</keyword>
<keyword id="KW-0967">Endosome</keyword>
<keyword id="KW-0297">G-protein coupled receptor</keyword>
<keyword id="KW-0325">Glycoprotein</keyword>
<keyword id="KW-1017">Isopeptide bond</keyword>
<keyword id="KW-0458">Lysosome</keyword>
<keyword id="KW-0472">Membrane</keyword>
<keyword id="KW-0597">Phosphoprotein</keyword>
<keyword id="KW-0654">Proteoglycan</keyword>
<keyword id="KW-0675">Receptor</keyword>
<keyword id="KW-1185">Reference proteome</keyword>
<keyword id="KW-0765">Sulfation</keyword>
<keyword id="KW-0807">Transducer</keyword>
<keyword id="KW-0812">Transmembrane</keyword>
<keyword id="KW-1133">Transmembrane helix</keyword>
<keyword id="KW-0832">Ubl conjugation</keyword>
<dbReference type="EMBL" id="AF051906">
    <property type="protein sequence ID" value="AAC39834.1"/>
    <property type="molecule type" value="mRNA"/>
</dbReference>
<dbReference type="SMR" id="O62747"/>
<dbReference type="STRING" id="9531.ENSCATP00000002499"/>
<dbReference type="GlyCosmos" id="O62747">
    <property type="glycosylation" value="2 sites, No reported glycans"/>
</dbReference>
<dbReference type="Proteomes" id="UP000233060">
    <property type="component" value="Unassembled WGS sequence"/>
</dbReference>
<dbReference type="GO" id="GO:0070161">
    <property type="term" value="C:anchoring junction"/>
    <property type="evidence" value="ECO:0007669"/>
    <property type="project" value="UniProtKB-SubCell"/>
</dbReference>
<dbReference type="GO" id="GO:0005769">
    <property type="term" value="C:early endosome"/>
    <property type="evidence" value="ECO:0000250"/>
    <property type="project" value="UniProtKB"/>
</dbReference>
<dbReference type="GO" id="GO:0009897">
    <property type="term" value="C:external side of plasma membrane"/>
    <property type="evidence" value="ECO:0007669"/>
    <property type="project" value="TreeGrafter"/>
</dbReference>
<dbReference type="GO" id="GO:0005770">
    <property type="term" value="C:late endosome"/>
    <property type="evidence" value="ECO:0000250"/>
    <property type="project" value="UniProtKB"/>
</dbReference>
<dbReference type="GO" id="GO:0005764">
    <property type="term" value="C:lysosome"/>
    <property type="evidence" value="ECO:0000250"/>
    <property type="project" value="UniProtKB"/>
</dbReference>
<dbReference type="GO" id="GO:0005886">
    <property type="term" value="C:plasma membrane"/>
    <property type="evidence" value="ECO:0000250"/>
    <property type="project" value="UniProtKB"/>
</dbReference>
<dbReference type="GO" id="GO:0019957">
    <property type="term" value="F:C-C chemokine binding"/>
    <property type="evidence" value="ECO:0007669"/>
    <property type="project" value="TreeGrafter"/>
</dbReference>
<dbReference type="GO" id="GO:0016493">
    <property type="term" value="F:C-C chemokine receptor activity"/>
    <property type="evidence" value="ECO:0007669"/>
    <property type="project" value="TreeGrafter"/>
</dbReference>
<dbReference type="GO" id="GO:0038147">
    <property type="term" value="F:C-X-C motif chemokine 12 receptor activity"/>
    <property type="evidence" value="ECO:0000250"/>
    <property type="project" value="UniProtKB"/>
</dbReference>
<dbReference type="GO" id="GO:0007420">
    <property type="term" value="P:brain development"/>
    <property type="evidence" value="ECO:0007669"/>
    <property type="project" value="TreeGrafter"/>
</dbReference>
<dbReference type="GO" id="GO:0019722">
    <property type="term" value="P:calcium-mediated signaling"/>
    <property type="evidence" value="ECO:0007669"/>
    <property type="project" value="TreeGrafter"/>
</dbReference>
<dbReference type="GO" id="GO:0060326">
    <property type="term" value="P:cell chemotaxis"/>
    <property type="evidence" value="ECO:0007669"/>
    <property type="project" value="TreeGrafter"/>
</dbReference>
<dbReference type="GO" id="GO:0071345">
    <property type="term" value="P:cellular response to cytokine stimulus"/>
    <property type="evidence" value="ECO:0000250"/>
    <property type="project" value="UniProtKB"/>
</dbReference>
<dbReference type="GO" id="GO:0038160">
    <property type="term" value="P:CXCL12-activated CXCR4 signaling pathway"/>
    <property type="evidence" value="ECO:0000250"/>
    <property type="project" value="UniProtKB"/>
</dbReference>
<dbReference type="GO" id="GO:0006955">
    <property type="term" value="P:immune response"/>
    <property type="evidence" value="ECO:0007669"/>
    <property type="project" value="TreeGrafter"/>
</dbReference>
<dbReference type="GO" id="GO:0022008">
    <property type="term" value="P:neurogenesis"/>
    <property type="evidence" value="ECO:0007669"/>
    <property type="project" value="TreeGrafter"/>
</dbReference>
<dbReference type="GO" id="GO:0007204">
    <property type="term" value="P:positive regulation of cytosolic calcium ion concentration"/>
    <property type="evidence" value="ECO:0007669"/>
    <property type="project" value="TreeGrafter"/>
</dbReference>
<dbReference type="CDD" id="cd15179">
    <property type="entry name" value="7tmA_CXCR4"/>
    <property type="match status" value="1"/>
</dbReference>
<dbReference type="FunFam" id="1.20.1070.10:FF:000063">
    <property type="entry name" value="C-X-C chemokine receptor type 4"/>
    <property type="match status" value="1"/>
</dbReference>
<dbReference type="Gene3D" id="1.20.1070.10">
    <property type="entry name" value="Rhodopsin 7-helix transmembrane proteins"/>
    <property type="match status" value="1"/>
</dbReference>
<dbReference type="InterPro" id="IPR050119">
    <property type="entry name" value="CCR1-9-like"/>
</dbReference>
<dbReference type="InterPro" id="IPR022726">
    <property type="entry name" value="Chemokine_CXCR4_N_dom"/>
</dbReference>
<dbReference type="InterPro" id="IPR000355">
    <property type="entry name" value="Chemokine_rcpt"/>
</dbReference>
<dbReference type="InterPro" id="IPR001277">
    <property type="entry name" value="CXCR4/ACKR2"/>
</dbReference>
<dbReference type="InterPro" id="IPR000276">
    <property type="entry name" value="GPCR_Rhodpsn"/>
</dbReference>
<dbReference type="InterPro" id="IPR017452">
    <property type="entry name" value="GPCR_Rhodpsn_7TM"/>
</dbReference>
<dbReference type="PANTHER" id="PTHR10489:SF594">
    <property type="entry name" value="C-X-C CHEMOKINE RECEPTOR TYPE 4"/>
    <property type="match status" value="1"/>
</dbReference>
<dbReference type="PANTHER" id="PTHR10489">
    <property type="entry name" value="CELL ADHESION MOLECULE"/>
    <property type="match status" value="1"/>
</dbReference>
<dbReference type="Pfam" id="PF00001">
    <property type="entry name" value="7tm_1"/>
    <property type="match status" value="1"/>
</dbReference>
<dbReference type="Pfam" id="PF12109">
    <property type="entry name" value="CXCR4_N"/>
    <property type="match status" value="1"/>
</dbReference>
<dbReference type="PRINTS" id="PR00657">
    <property type="entry name" value="CCCHEMOKINER"/>
</dbReference>
<dbReference type="PRINTS" id="PR00645">
    <property type="entry name" value="CXCCHMKINER4"/>
</dbReference>
<dbReference type="PRINTS" id="PR00237">
    <property type="entry name" value="GPCRRHODOPSN"/>
</dbReference>
<dbReference type="SUPFAM" id="SSF81321">
    <property type="entry name" value="Family A G protein-coupled receptor-like"/>
    <property type="match status" value="1"/>
</dbReference>
<dbReference type="PROSITE" id="PS00237">
    <property type="entry name" value="G_PROTEIN_RECEP_F1_1"/>
    <property type="match status" value="1"/>
</dbReference>
<dbReference type="PROSITE" id="PS50262">
    <property type="entry name" value="G_PROTEIN_RECEP_F1_2"/>
    <property type="match status" value="1"/>
</dbReference>
<reference key="1">
    <citation type="journal article" date="1998" name="Virology">
        <title>Primary SIVsm isolates use the CCR5 coreceptor from sooty mangabeys naturally infected in west Africa: a comparison of coreceptor usage of primary SIVsm, HIV-2, and SIVmac.</title>
        <authorList>
            <person name="Chen Z."/>
            <person name="Gettie A."/>
            <person name="Ho D.D."/>
            <person name="Marx P.A."/>
        </authorList>
    </citation>
    <scope>NUCLEOTIDE SEQUENCE [MRNA]</scope>
</reference>
<feature type="chain" id="PRO_0000069350" description="C-X-C chemokine receptor type 4">
    <location>
        <begin position="1"/>
        <end position="352"/>
    </location>
</feature>
<feature type="topological domain" description="Extracellular" evidence="6">
    <location>
        <begin position="1"/>
        <end position="38"/>
    </location>
</feature>
<feature type="transmembrane region" description="Helical; Name=1" evidence="2">
    <location>
        <begin position="39"/>
        <end position="63"/>
    </location>
</feature>
<feature type="topological domain" description="Cytoplasmic" evidence="6">
    <location>
        <begin position="64"/>
        <end position="77"/>
    </location>
</feature>
<feature type="transmembrane region" description="Helical; Name=2" evidence="2">
    <location>
        <begin position="78"/>
        <end position="99"/>
    </location>
</feature>
<feature type="topological domain" description="Extracellular" evidence="6">
    <location>
        <begin position="100"/>
        <end position="110"/>
    </location>
</feature>
<feature type="transmembrane region" description="Helical; Name=3" evidence="2">
    <location>
        <begin position="111"/>
        <end position="130"/>
    </location>
</feature>
<feature type="topological domain" description="Cytoplasmic" evidence="6">
    <location>
        <begin position="131"/>
        <end position="154"/>
    </location>
</feature>
<feature type="transmembrane region" description="Helical; Name=4" evidence="2">
    <location>
        <begin position="155"/>
        <end position="174"/>
    </location>
</feature>
<feature type="topological domain" description="Extracellular" evidence="6">
    <location>
        <begin position="175"/>
        <end position="195"/>
    </location>
</feature>
<feature type="transmembrane region" description="Helical; Name=5" evidence="2">
    <location>
        <begin position="196"/>
        <end position="216"/>
    </location>
</feature>
<feature type="topological domain" description="Cytoplasmic" evidence="6">
    <location>
        <begin position="217"/>
        <end position="241"/>
    </location>
</feature>
<feature type="transmembrane region" description="Helical; Name=6" evidence="2">
    <location>
        <begin position="242"/>
        <end position="261"/>
    </location>
</feature>
<feature type="topological domain" description="Extracellular" evidence="6">
    <location>
        <begin position="262"/>
        <end position="282"/>
    </location>
</feature>
<feature type="transmembrane region" description="Helical; Name=7" evidence="2">
    <location>
        <begin position="283"/>
        <end position="302"/>
    </location>
</feature>
<feature type="topological domain" description="Cytoplasmic" evidence="6">
    <location>
        <begin position="303"/>
        <end position="352"/>
    </location>
</feature>
<feature type="region of interest" description="Important for chemokine binding and signaling" evidence="1">
    <location>
        <begin position="1"/>
        <end position="21"/>
    </location>
</feature>
<feature type="region of interest" description="Chemokine binding" evidence="1">
    <location>
        <begin position="94"/>
        <end position="97"/>
    </location>
</feature>
<feature type="region of interest" description="Chemokine binding" evidence="1">
    <location>
        <begin position="113"/>
        <end position="117"/>
    </location>
</feature>
<feature type="region of interest" description="Involved in dimerization; when bound to chemokine" evidence="1">
    <location>
        <begin position="135"/>
        <end position="147"/>
    </location>
</feature>
<feature type="region of interest" description="Chemokine binding, important for signaling" evidence="1">
    <location>
        <begin position="186"/>
        <end position="190"/>
    </location>
</feature>
<feature type="region of interest" description="Involved in dimerization" evidence="1">
    <location>
        <begin position="191"/>
        <end position="210"/>
    </location>
</feature>
<feature type="region of interest" description="Involved in dimerization" evidence="1">
    <location>
        <begin position="266"/>
        <end position="268"/>
    </location>
</feature>
<feature type="region of interest" description="Disordered" evidence="5">
    <location>
        <begin position="329"/>
        <end position="352"/>
    </location>
</feature>
<feature type="short sequence motif" description="Important for signaling" evidence="1">
    <location>
        <begin position="133"/>
        <end position="135"/>
    </location>
</feature>
<feature type="compositionally biased region" description="Low complexity" evidence="5">
    <location>
        <begin position="337"/>
        <end position="352"/>
    </location>
</feature>
<feature type="site" description="Chemokine binding" evidence="1">
    <location>
        <position position="288"/>
    </location>
</feature>
<feature type="modified residue" description="Sulfotyrosine" evidence="2">
    <location>
        <position position="7"/>
    </location>
</feature>
<feature type="modified residue" description="Sulfotyrosine" evidence="2">
    <location>
        <position position="12"/>
    </location>
</feature>
<feature type="modified residue" description="Sulfotyrosine" evidence="2">
    <location>
        <position position="21"/>
    </location>
</feature>
<feature type="modified residue" description="Phosphoserine" evidence="2">
    <location>
        <position position="319"/>
    </location>
</feature>
<feature type="modified residue" description="Phosphoserine" evidence="2">
    <location>
        <position position="321"/>
    </location>
</feature>
<feature type="modified residue" description="Phosphoserine; by PKC and GRK6" evidence="2">
    <location>
        <position position="324"/>
    </location>
</feature>
<feature type="modified residue" description="Phosphoserine; by PKC and GRK6" evidence="2">
    <location>
        <position position="325"/>
    </location>
</feature>
<feature type="modified residue" description="Phosphoserine; by GRK6" evidence="2">
    <location>
        <position position="330"/>
    </location>
</feature>
<feature type="modified residue" description="Phosphoserine; by GRK6" evidence="2">
    <location>
        <position position="339"/>
    </location>
</feature>
<feature type="modified residue" description="Phosphoserine" evidence="2">
    <location>
        <position position="348"/>
    </location>
</feature>
<feature type="modified residue" description="Phosphoserine" evidence="2">
    <location>
        <position position="351"/>
    </location>
</feature>
<feature type="glycosylation site" description="N-linked (GlcNAc...) asparagine" evidence="1">
    <location>
        <position position="11"/>
    </location>
</feature>
<feature type="glycosylation site" description="O-linked (Xyl...) (chondroitin sulfate) serine" evidence="2">
    <location>
        <position position="18"/>
    </location>
</feature>
<feature type="disulfide bond" evidence="4">
    <location>
        <begin position="28"/>
        <end position="274"/>
    </location>
</feature>
<feature type="disulfide bond" evidence="4">
    <location>
        <begin position="109"/>
        <end position="186"/>
    </location>
</feature>
<feature type="cross-link" description="Glycyl lysine isopeptide (Lys-Gly) (interchain with G-Cter in ubiquitin)" evidence="2">
    <location>
        <position position="331"/>
    </location>
</feature>